<name>RS12_STRP6</name>
<keyword id="KW-0687">Ribonucleoprotein</keyword>
<keyword id="KW-0689">Ribosomal protein</keyword>
<keyword id="KW-0694">RNA-binding</keyword>
<keyword id="KW-0699">rRNA-binding</keyword>
<keyword id="KW-0820">tRNA-binding</keyword>
<dbReference type="EMBL" id="CP000003">
    <property type="protein sequence ID" value="AAT86397.1"/>
    <property type="molecule type" value="Genomic_DNA"/>
</dbReference>
<dbReference type="RefSeq" id="WP_002986049.1">
    <property type="nucleotide sequence ID" value="NC_006086.1"/>
</dbReference>
<dbReference type="SMR" id="Q5XDW6"/>
<dbReference type="GeneID" id="69900197"/>
<dbReference type="KEGG" id="spa:M6_Spy0262"/>
<dbReference type="HOGENOM" id="CLU_104295_1_2_9"/>
<dbReference type="Proteomes" id="UP000001167">
    <property type="component" value="Chromosome"/>
</dbReference>
<dbReference type="GO" id="GO:0015935">
    <property type="term" value="C:small ribosomal subunit"/>
    <property type="evidence" value="ECO:0007669"/>
    <property type="project" value="InterPro"/>
</dbReference>
<dbReference type="GO" id="GO:0019843">
    <property type="term" value="F:rRNA binding"/>
    <property type="evidence" value="ECO:0007669"/>
    <property type="project" value="UniProtKB-UniRule"/>
</dbReference>
<dbReference type="GO" id="GO:0003735">
    <property type="term" value="F:structural constituent of ribosome"/>
    <property type="evidence" value="ECO:0007669"/>
    <property type="project" value="InterPro"/>
</dbReference>
<dbReference type="GO" id="GO:0000049">
    <property type="term" value="F:tRNA binding"/>
    <property type="evidence" value="ECO:0007669"/>
    <property type="project" value="UniProtKB-UniRule"/>
</dbReference>
<dbReference type="GO" id="GO:0006412">
    <property type="term" value="P:translation"/>
    <property type="evidence" value="ECO:0007669"/>
    <property type="project" value="UniProtKB-UniRule"/>
</dbReference>
<dbReference type="CDD" id="cd03368">
    <property type="entry name" value="Ribosomal_S12"/>
    <property type="match status" value="1"/>
</dbReference>
<dbReference type="FunFam" id="2.40.50.140:FF:000001">
    <property type="entry name" value="30S ribosomal protein S12"/>
    <property type="match status" value="1"/>
</dbReference>
<dbReference type="Gene3D" id="2.40.50.140">
    <property type="entry name" value="Nucleic acid-binding proteins"/>
    <property type="match status" value="1"/>
</dbReference>
<dbReference type="HAMAP" id="MF_00403_B">
    <property type="entry name" value="Ribosomal_uS12_B"/>
    <property type="match status" value="1"/>
</dbReference>
<dbReference type="InterPro" id="IPR012340">
    <property type="entry name" value="NA-bd_OB-fold"/>
</dbReference>
<dbReference type="InterPro" id="IPR006032">
    <property type="entry name" value="Ribosomal_uS12"/>
</dbReference>
<dbReference type="InterPro" id="IPR005679">
    <property type="entry name" value="Ribosomal_uS12_bac"/>
</dbReference>
<dbReference type="NCBIfam" id="TIGR00981">
    <property type="entry name" value="rpsL_bact"/>
    <property type="match status" value="1"/>
</dbReference>
<dbReference type="PANTHER" id="PTHR11652">
    <property type="entry name" value="30S RIBOSOMAL PROTEIN S12 FAMILY MEMBER"/>
    <property type="match status" value="1"/>
</dbReference>
<dbReference type="Pfam" id="PF00164">
    <property type="entry name" value="Ribosom_S12_S23"/>
    <property type="match status" value="1"/>
</dbReference>
<dbReference type="PRINTS" id="PR01034">
    <property type="entry name" value="RIBOSOMALS12"/>
</dbReference>
<dbReference type="SUPFAM" id="SSF50249">
    <property type="entry name" value="Nucleic acid-binding proteins"/>
    <property type="match status" value="1"/>
</dbReference>
<dbReference type="PROSITE" id="PS00055">
    <property type="entry name" value="RIBOSOMAL_S12"/>
    <property type="match status" value="1"/>
</dbReference>
<reference key="1">
    <citation type="journal article" date="2004" name="J. Infect. Dis.">
        <title>Progress toward characterization of the group A Streptococcus metagenome: complete genome sequence of a macrolide-resistant serotype M6 strain.</title>
        <authorList>
            <person name="Banks D.J."/>
            <person name="Porcella S.F."/>
            <person name="Barbian K.D."/>
            <person name="Beres S.B."/>
            <person name="Philips L.E."/>
            <person name="Voyich J.M."/>
            <person name="DeLeo F.R."/>
            <person name="Martin J.M."/>
            <person name="Somerville G.A."/>
            <person name="Musser J.M."/>
        </authorList>
    </citation>
    <scope>NUCLEOTIDE SEQUENCE [LARGE SCALE GENOMIC DNA]</scope>
    <source>
        <strain>ATCC BAA-946 / MGAS10394</strain>
    </source>
</reference>
<evidence type="ECO:0000255" key="1">
    <source>
        <dbReference type="HAMAP-Rule" id="MF_00403"/>
    </source>
</evidence>
<evidence type="ECO:0000256" key="2">
    <source>
        <dbReference type="SAM" id="MobiDB-lite"/>
    </source>
</evidence>
<evidence type="ECO:0000305" key="3"/>
<feature type="chain" id="PRO_0000146329" description="Small ribosomal subunit protein uS12">
    <location>
        <begin position="1"/>
        <end position="137"/>
    </location>
</feature>
<feature type="region of interest" description="Disordered" evidence="2">
    <location>
        <begin position="1"/>
        <end position="21"/>
    </location>
</feature>
<feature type="region of interest" description="Disordered" evidence="2">
    <location>
        <begin position="33"/>
        <end position="57"/>
    </location>
</feature>
<organism>
    <name type="scientific">Streptococcus pyogenes serotype M6 (strain ATCC BAA-946 / MGAS10394)</name>
    <dbReference type="NCBI Taxonomy" id="286636"/>
    <lineage>
        <taxon>Bacteria</taxon>
        <taxon>Bacillati</taxon>
        <taxon>Bacillota</taxon>
        <taxon>Bacilli</taxon>
        <taxon>Lactobacillales</taxon>
        <taxon>Streptococcaceae</taxon>
        <taxon>Streptococcus</taxon>
    </lineage>
</organism>
<sequence length="137" mass="15086">MPTINQLVRKPRKSKIEKSDSPALNIGYNSHKKVQTKMAAPQKRGVATRVGTMTPKKPNSALRKFARVRLSNLIEVTAYIPGIGHNLQEHSVVLIRGGRVKDLPGVRYHIVRGALDTAGVADRKQGRSKYGAKRPKG</sequence>
<proteinExistence type="inferred from homology"/>
<protein>
    <recommendedName>
        <fullName evidence="1">Small ribosomal subunit protein uS12</fullName>
    </recommendedName>
    <alternativeName>
        <fullName evidence="3">30S ribosomal protein S12</fullName>
    </alternativeName>
</protein>
<gene>
    <name evidence="1" type="primary">rpsL</name>
    <name type="ordered locus">M6_Spy0262</name>
</gene>
<accession>Q5XDW6</accession>
<comment type="function">
    <text evidence="1">With S4 and S5 plays an important role in translational accuracy.</text>
</comment>
<comment type="function">
    <text evidence="1">Interacts with and stabilizes bases of the 16S rRNA that are involved in tRNA selection in the A site and with the mRNA backbone. Located at the interface of the 30S and 50S subunits, it traverses the body of the 30S subunit contacting proteins on the other side and probably holding the rRNA structure together. The combined cluster of proteins S8, S12 and S17 appears to hold together the shoulder and platform of the 30S subunit.</text>
</comment>
<comment type="subunit">
    <text evidence="1">Part of the 30S ribosomal subunit. Contacts proteins S8 and S17. May interact with IF1 in the 30S initiation complex.</text>
</comment>
<comment type="similarity">
    <text evidence="1">Belongs to the universal ribosomal protein uS12 family.</text>
</comment>
<comment type="caution">
    <text evidence="3">Because the enzyme that would modify Asp-102 to 3-methylthioaspartic acid has not been found in the proteome of this organism, that modification is not predicted.</text>
</comment>